<organism>
    <name type="scientific">Arabidopsis thaliana</name>
    <name type="common">Mouse-ear cress</name>
    <dbReference type="NCBI Taxonomy" id="3702"/>
    <lineage>
        <taxon>Eukaryota</taxon>
        <taxon>Viridiplantae</taxon>
        <taxon>Streptophyta</taxon>
        <taxon>Embryophyta</taxon>
        <taxon>Tracheophyta</taxon>
        <taxon>Spermatophyta</taxon>
        <taxon>Magnoliopsida</taxon>
        <taxon>eudicotyledons</taxon>
        <taxon>Gunneridae</taxon>
        <taxon>Pentapetalae</taxon>
        <taxon>rosids</taxon>
        <taxon>malvids</taxon>
        <taxon>Brassicales</taxon>
        <taxon>Brassicaceae</taxon>
        <taxon>Camelineae</taxon>
        <taxon>Arabidopsis</taxon>
    </lineage>
</organism>
<name>PAM68_ARATH</name>
<protein>
    <recommendedName>
        <fullName>Protein PAM68, chloroplastic</fullName>
    </recommendedName>
    <alternativeName>
        <fullName>PHOTOSYNTHESIS AFFECTED MUTANT 68</fullName>
    </alternativeName>
</protein>
<reference key="1">
    <citation type="journal article" date="1999" name="Nature">
        <title>Sequence and analysis of chromosome 4 of the plant Arabidopsis thaliana.</title>
        <authorList>
            <person name="Mayer K.F.X."/>
            <person name="Schueller C."/>
            <person name="Wambutt R."/>
            <person name="Murphy G."/>
            <person name="Volckaert G."/>
            <person name="Pohl T."/>
            <person name="Duesterhoeft A."/>
            <person name="Stiekema W."/>
            <person name="Entian K.-D."/>
            <person name="Terryn N."/>
            <person name="Harris B."/>
            <person name="Ansorge W."/>
            <person name="Brandt P."/>
            <person name="Grivell L.A."/>
            <person name="Rieger M."/>
            <person name="Weichselgartner M."/>
            <person name="de Simone V."/>
            <person name="Obermaier B."/>
            <person name="Mache R."/>
            <person name="Mueller M."/>
            <person name="Kreis M."/>
            <person name="Delseny M."/>
            <person name="Puigdomenech P."/>
            <person name="Watson M."/>
            <person name="Schmidtheini T."/>
            <person name="Reichert B."/>
            <person name="Portetelle D."/>
            <person name="Perez-Alonso M."/>
            <person name="Boutry M."/>
            <person name="Bancroft I."/>
            <person name="Vos P."/>
            <person name="Hoheisel J."/>
            <person name="Zimmermann W."/>
            <person name="Wedler H."/>
            <person name="Ridley P."/>
            <person name="Langham S.-A."/>
            <person name="McCullagh B."/>
            <person name="Bilham L."/>
            <person name="Robben J."/>
            <person name="van der Schueren J."/>
            <person name="Grymonprez B."/>
            <person name="Chuang Y.-J."/>
            <person name="Vandenbussche F."/>
            <person name="Braeken M."/>
            <person name="Weltjens I."/>
            <person name="Voet M."/>
            <person name="Bastiaens I."/>
            <person name="Aert R."/>
            <person name="Defoor E."/>
            <person name="Weitzenegger T."/>
            <person name="Bothe G."/>
            <person name="Ramsperger U."/>
            <person name="Hilbert H."/>
            <person name="Braun M."/>
            <person name="Holzer E."/>
            <person name="Brandt A."/>
            <person name="Peters S."/>
            <person name="van Staveren M."/>
            <person name="Dirkse W."/>
            <person name="Mooijman P."/>
            <person name="Klein Lankhorst R."/>
            <person name="Rose M."/>
            <person name="Hauf J."/>
            <person name="Koetter P."/>
            <person name="Berneiser S."/>
            <person name="Hempel S."/>
            <person name="Feldpausch M."/>
            <person name="Lamberth S."/>
            <person name="Van den Daele H."/>
            <person name="De Keyser A."/>
            <person name="Buysshaert C."/>
            <person name="Gielen J."/>
            <person name="Villarroel R."/>
            <person name="De Clercq R."/>
            <person name="van Montagu M."/>
            <person name="Rogers J."/>
            <person name="Cronin A."/>
            <person name="Quail M.A."/>
            <person name="Bray-Allen S."/>
            <person name="Clark L."/>
            <person name="Doggett J."/>
            <person name="Hall S."/>
            <person name="Kay M."/>
            <person name="Lennard N."/>
            <person name="McLay K."/>
            <person name="Mayes R."/>
            <person name="Pettett A."/>
            <person name="Rajandream M.A."/>
            <person name="Lyne M."/>
            <person name="Benes V."/>
            <person name="Rechmann S."/>
            <person name="Borkova D."/>
            <person name="Bloecker H."/>
            <person name="Scharfe M."/>
            <person name="Grimm M."/>
            <person name="Loehnert T.-H."/>
            <person name="Dose S."/>
            <person name="de Haan M."/>
            <person name="Maarse A.C."/>
            <person name="Schaefer M."/>
            <person name="Mueller-Auer S."/>
            <person name="Gabel C."/>
            <person name="Fuchs M."/>
            <person name="Fartmann B."/>
            <person name="Granderath K."/>
            <person name="Dauner D."/>
            <person name="Herzl A."/>
            <person name="Neumann S."/>
            <person name="Argiriou A."/>
            <person name="Vitale D."/>
            <person name="Liguori R."/>
            <person name="Piravandi E."/>
            <person name="Massenet O."/>
            <person name="Quigley F."/>
            <person name="Clabauld G."/>
            <person name="Muendlein A."/>
            <person name="Felber R."/>
            <person name="Schnabl S."/>
            <person name="Hiller R."/>
            <person name="Schmidt W."/>
            <person name="Lecharny A."/>
            <person name="Aubourg S."/>
            <person name="Chefdor F."/>
            <person name="Cooke R."/>
            <person name="Berger C."/>
            <person name="Monfort A."/>
            <person name="Casacuberta E."/>
            <person name="Gibbons T."/>
            <person name="Weber N."/>
            <person name="Vandenbol M."/>
            <person name="Bargues M."/>
            <person name="Terol J."/>
            <person name="Torres A."/>
            <person name="Perez-Perez A."/>
            <person name="Purnelle B."/>
            <person name="Bent E."/>
            <person name="Johnson S."/>
            <person name="Tacon D."/>
            <person name="Jesse T."/>
            <person name="Heijnen L."/>
            <person name="Schwarz S."/>
            <person name="Scholler P."/>
            <person name="Heber S."/>
            <person name="Francs P."/>
            <person name="Bielke C."/>
            <person name="Frishman D."/>
            <person name="Haase D."/>
            <person name="Lemcke K."/>
            <person name="Mewes H.-W."/>
            <person name="Stocker S."/>
            <person name="Zaccaria P."/>
            <person name="Bevan M."/>
            <person name="Wilson R.K."/>
            <person name="de la Bastide M."/>
            <person name="Habermann K."/>
            <person name="Parnell L."/>
            <person name="Dedhia N."/>
            <person name="Gnoj L."/>
            <person name="Schutz K."/>
            <person name="Huang E."/>
            <person name="Spiegel L."/>
            <person name="Sekhon M."/>
            <person name="Murray J."/>
            <person name="Sheet P."/>
            <person name="Cordes M."/>
            <person name="Abu-Threideh J."/>
            <person name="Stoneking T."/>
            <person name="Kalicki J."/>
            <person name="Graves T."/>
            <person name="Harmon G."/>
            <person name="Edwards J."/>
            <person name="Latreille P."/>
            <person name="Courtney L."/>
            <person name="Cloud J."/>
            <person name="Abbott A."/>
            <person name="Scott K."/>
            <person name="Johnson D."/>
            <person name="Minx P."/>
            <person name="Bentley D."/>
            <person name="Fulton B."/>
            <person name="Miller N."/>
            <person name="Greco T."/>
            <person name="Kemp K."/>
            <person name="Kramer J."/>
            <person name="Fulton L."/>
            <person name="Mardis E."/>
            <person name="Dante M."/>
            <person name="Pepin K."/>
            <person name="Hillier L.W."/>
            <person name="Nelson J."/>
            <person name="Spieth J."/>
            <person name="Ryan E."/>
            <person name="Andrews S."/>
            <person name="Geisel C."/>
            <person name="Layman D."/>
            <person name="Du H."/>
            <person name="Ali J."/>
            <person name="Berghoff A."/>
            <person name="Jones K."/>
            <person name="Drone K."/>
            <person name="Cotton M."/>
            <person name="Joshu C."/>
            <person name="Antonoiu B."/>
            <person name="Zidanic M."/>
            <person name="Strong C."/>
            <person name="Sun H."/>
            <person name="Lamar B."/>
            <person name="Yordan C."/>
            <person name="Ma P."/>
            <person name="Zhong J."/>
            <person name="Preston R."/>
            <person name="Vil D."/>
            <person name="Shekher M."/>
            <person name="Matero A."/>
            <person name="Shah R."/>
            <person name="Swaby I.K."/>
            <person name="O'Shaughnessy A."/>
            <person name="Rodriguez M."/>
            <person name="Hoffman J."/>
            <person name="Till S."/>
            <person name="Granat S."/>
            <person name="Shohdy N."/>
            <person name="Hasegawa A."/>
            <person name="Hameed A."/>
            <person name="Lodhi M."/>
            <person name="Johnson A."/>
            <person name="Chen E."/>
            <person name="Marra M.A."/>
            <person name="Martienssen R."/>
            <person name="McCombie W.R."/>
        </authorList>
    </citation>
    <scope>NUCLEOTIDE SEQUENCE [LARGE SCALE GENOMIC DNA]</scope>
    <source>
        <strain>cv. Columbia</strain>
    </source>
</reference>
<reference key="2">
    <citation type="journal article" date="2017" name="Plant J.">
        <title>Araport11: a complete reannotation of the Arabidopsis thaliana reference genome.</title>
        <authorList>
            <person name="Cheng C.Y."/>
            <person name="Krishnakumar V."/>
            <person name="Chan A.P."/>
            <person name="Thibaud-Nissen F."/>
            <person name="Schobel S."/>
            <person name="Town C.D."/>
        </authorList>
    </citation>
    <scope>GENOME REANNOTATION</scope>
    <source>
        <strain>cv. Columbia</strain>
    </source>
</reference>
<reference key="3">
    <citation type="submission" date="2006-12" db="EMBL/GenBank/DDBJ databases">
        <title>Arabidopsis ORF clones.</title>
        <authorList>
            <person name="Bautista V.R."/>
            <person name="Kim C.J."/>
            <person name="Chen H."/>
            <person name="Quinitio C."/>
            <person name="Ecker J.R."/>
        </authorList>
    </citation>
    <scope>NUCLEOTIDE SEQUENCE [MRNA]</scope>
</reference>
<reference key="4">
    <citation type="journal article" date="2009" name="Plant Physiol.">
        <title>Large-scale Arabidopsis phosphoproteome profiling reveals novel chloroplast kinase substrates and phosphorylation networks.</title>
        <authorList>
            <person name="Reiland S."/>
            <person name="Messerli G."/>
            <person name="Baerenfaller K."/>
            <person name="Gerrits B."/>
            <person name="Endler A."/>
            <person name="Grossmann J."/>
            <person name="Gruissem W."/>
            <person name="Baginsky S."/>
        </authorList>
    </citation>
    <scope>IDENTIFICATION BY MASS SPECTROMETRY [LARGE SCALE ANALYSIS]</scope>
</reference>
<reference key="5">
    <citation type="journal article" date="2010" name="Plant Cell">
        <title>The Arabidopsis thylakoid protein PAM68 is required for efficient D1 biogenesis and photosystem II assembly.</title>
        <authorList>
            <person name="Armbruster U."/>
            <person name="Zuhlke J."/>
            <person name="Rengstl B."/>
            <person name="Kreller R."/>
            <person name="Makarenko E."/>
            <person name="Ruhle T."/>
            <person name="Schunemann D."/>
            <person name="Jahns P."/>
            <person name="Weisshaar B."/>
            <person name="Nickelsen J."/>
            <person name="Leister D."/>
        </authorList>
    </citation>
    <scope>FUNCTION</scope>
    <scope>SUBCELLULAR LOCATION</scope>
    <scope>TOPOLOGY</scope>
    <scope>INTERACTION WITH PSBA; PSBB; PSBC; PSBD; PSBH; PSBI; HCF136; LPA1; LPA2 AND ALB3</scope>
    <scope>DISRUPTION PHENOTYPE</scope>
</reference>
<comment type="function">
    <text evidence="3">Involved in early steps in photosystem II (PSII) biogenesis and in maturation and stability of newly synthesized psbA protein.</text>
</comment>
<comment type="subunit">
    <text evidence="3">Interacts with the PSII subunits psbA, psbB, psbC, psbD, psbH and psbI, but not with psbE, psbF or psbO. Interacts with the PSII assembly factors HCF136, LPA1, LPA2 and ALB3.</text>
</comment>
<comment type="subcellular location">
    <subcellularLocation>
        <location evidence="3">Plastid</location>
        <location evidence="3">Chloroplast thylakoid membrane</location>
        <topology evidence="3">Multi-pass membrane protein</topology>
    </subcellularLocation>
</comment>
<comment type="disruption phenotype">
    <text evidence="3">Strongly reduced growth. Pale-green cotyledons and leaves.</text>
</comment>
<sequence length="214" mass="24212">MASVPCSFKLSAHRRSSSKLDGNNKQCSSLVERLRDKTKSQVPKSITCINRLEISRIAPLHATMNSPKGFGPPPKKTKKSKKPKPGNQSDEDDDDEDEDDDDEEDERERGVIPEIVTNRMISRMGFTVGLPLFIGLLFFPFFYYLKVGLKVDVPTWVPFIVSFVFFGTALAGVSYGIVSSSWDPLREGSLLGWNEAKKNWPVFWQSFWNSSDKR</sequence>
<evidence type="ECO:0000255" key="1"/>
<evidence type="ECO:0000256" key="2">
    <source>
        <dbReference type="SAM" id="MobiDB-lite"/>
    </source>
</evidence>
<evidence type="ECO:0000269" key="3">
    <source>
    </source>
</evidence>
<dbReference type="EMBL" id="BT029521">
    <property type="protein sequence ID" value="ABL66777.1"/>
    <property type="molecule type" value="mRNA"/>
</dbReference>
<dbReference type="EMBL" id="AL021687">
    <property type="protein sequence ID" value="CAA16699.1"/>
    <property type="molecule type" value="Genomic_DNA"/>
</dbReference>
<dbReference type="EMBL" id="AL161550">
    <property type="protein sequence ID" value="CAB78912.1"/>
    <property type="molecule type" value="Genomic_DNA"/>
</dbReference>
<dbReference type="EMBL" id="CP002687">
    <property type="protein sequence ID" value="AEE84140.1"/>
    <property type="molecule type" value="Genomic_DNA"/>
</dbReference>
<dbReference type="PIR" id="T04431">
    <property type="entry name" value="T04431"/>
</dbReference>
<dbReference type="RefSeq" id="NP_974571.1">
    <property type="nucleotide sequence ID" value="NM_202842.3"/>
</dbReference>
<dbReference type="FunCoup" id="O49668">
    <property type="interactions" value="852"/>
</dbReference>
<dbReference type="STRING" id="3702.O49668"/>
<dbReference type="iPTMnet" id="O49668"/>
<dbReference type="PaxDb" id="3702-AT4G19100.1"/>
<dbReference type="ProteomicsDB" id="248634"/>
<dbReference type="EnsemblPlants" id="AT4G19100.1">
    <property type="protein sequence ID" value="AT4G19100.1"/>
    <property type="gene ID" value="AT4G19100"/>
</dbReference>
<dbReference type="GeneID" id="2745715"/>
<dbReference type="Gramene" id="AT4G19100.1">
    <property type="protein sequence ID" value="AT4G19100.1"/>
    <property type="gene ID" value="AT4G19100"/>
</dbReference>
<dbReference type="KEGG" id="ath:AT4G19100"/>
<dbReference type="Araport" id="AT4G19100"/>
<dbReference type="TAIR" id="AT4G19100">
    <property type="gene designation" value="PAM68"/>
</dbReference>
<dbReference type="eggNOG" id="ENOG502RXKE">
    <property type="taxonomic scope" value="Eukaryota"/>
</dbReference>
<dbReference type="HOGENOM" id="CLU_099250_0_0_1"/>
<dbReference type="InParanoid" id="O49668"/>
<dbReference type="OrthoDB" id="5862at2759"/>
<dbReference type="PhylomeDB" id="O49668"/>
<dbReference type="BioCyc" id="MetaCyc:MONOMER-16601"/>
<dbReference type="PRO" id="PR:O49668"/>
<dbReference type="Proteomes" id="UP000006548">
    <property type="component" value="Chromosome 4"/>
</dbReference>
<dbReference type="ExpressionAtlas" id="O49668">
    <property type="expression patterns" value="baseline and differential"/>
</dbReference>
<dbReference type="GO" id="GO:0009507">
    <property type="term" value="C:chloroplast"/>
    <property type="evidence" value="ECO:0007005"/>
    <property type="project" value="TAIR"/>
</dbReference>
<dbReference type="GO" id="GO:0009535">
    <property type="term" value="C:chloroplast thylakoid membrane"/>
    <property type="evidence" value="ECO:0007669"/>
    <property type="project" value="UniProtKB-SubCell"/>
</dbReference>
<dbReference type="GO" id="GO:0009523">
    <property type="term" value="C:photosystem II"/>
    <property type="evidence" value="ECO:0007669"/>
    <property type="project" value="UniProtKB-KW"/>
</dbReference>
<dbReference type="GO" id="GO:0010207">
    <property type="term" value="P:photosystem II assembly"/>
    <property type="evidence" value="ECO:0000315"/>
    <property type="project" value="TAIR"/>
</dbReference>
<dbReference type="InterPro" id="IPR021855">
    <property type="entry name" value="PAM68-like"/>
</dbReference>
<dbReference type="PANTHER" id="PTHR34575">
    <property type="entry name" value="PROTEIN PAM68, CHLOROPLASTIC"/>
    <property type="match status" value="1"/>
</dbReference>
<dbReference type="PANTHER" id="PTHR34575:SF1">
    <property type="entry name" value="PROTEIN PAM68, CHLOROPLASTIC"/>
    <property type="match status" value="1"/>
</dbReference>
<dbReference type="Pfam" id="PF11947">
    <property type="entry name" value="DUF3464"/>
    <property type="match status" value="1"/>
</dbReference>
<keyword id="KW-0150">Chloroplast</keyword>
<keyword id="KW-0472">Membrane</keyword>
<keyword id="KW-0602">Photosynthesis</keyword>
<keyword id="KW-0604">Photosystem II</keyword>
<keyword id="KW-0934">Plastid</keyword>
<keyword id="KW-1185">Reference proteome</keyword>
<keyword id="KW-0793">Thylakoid</keyword>
<keyword id="KW-0809">Transit peptide</keyword>
<keyword id="KW-0812">Transmembrane</keyword>
<keyword id="KW-1133">Transmembrane helix</keyword>
<proteinExistence type="evidence at protein level"/>
<gene>
    <name type="primary">PAM68</name>
    <name type="ordered locus">At4g19100</name>
    <name type="ORF">T18B16.70</name>
</gene>
<accession>O49668</accession>
<feature type="transit peptide" description="Chloroplast" evidence="1">
    <location>
        <begin position="1"/>
        <end position="35"/>
    </location>
</feature>
<feature type="chain" id="PRO_0000403964" description="Protein PAM68, chloroplastic">
    <location>
        <begin position="36"/>
        <end position="214"/>
    </location>
</feature>
<feature type="topological domain" description="Stromal" evidence="3">
    <location>
        <begin position="36"/>
        <end position="124"/>
    </location>
</feature>
<feature type="transmembrane region" description="Helical" evidence="1">
    <location>
        <begin position="125"/>
        <end position="145"/>
    </location>
</feature>
<feature type="topological domain" description="Lumenal, thylakoid" evidence="3">
    <location>
        <begin position="146"/>
        <end position="152"/>
    </location>
</feature>
<feature type="transmembrane region" description="Helical" evidence="1">
    <location>
        <begin position="153"/>
        <end position="173"/>
    </location>
</feature>
<feature type="topological domain" description="Stromal" evidence="3">
    <location>
        <begin position="174"/>
        <end position="214"/>
    </location>
</feature>
<feature type="region of interest" description="Disordered" evidence="2">
    <location>
        <begin position="1"/>
        <end position="26"/>
    </location>
</feature>
<feature type="region of interest" description="Disordered" evidence="2">
    <location>
        <begin position="62"/>
        <end position="111"/>
    </location>
</feature>
<feature type="compositionally biased region" description="Basic residues" evidence="2">
    <location>
        <begin position="75"/>
        <end position="84"/>
    </location>
</feature>
<feature type="compositionally biased region" description="Acidic residues" evidence="2">
    <location>
        <begin position="89"/>
        <end position="106"/>
    </location>
</feature>